<dbReference type="EMBL" id="AE017340">
    <property type="protein sequence ID" value="AAV80864.1"/>
    <property type="molecule type" value="Genomic_DNA"/>
</dbReference>
<dbReference type="RefSeq" id="WP_011233284.1">
    <property type="nucleotide sequence ID" value="NC_006512.1"/>
</dbReference>
<dbReference type="SMR" id="Q5QXI3"/>
<dbReference type="STRING" id="283942.IL0020"/>
<dbReference type="DNASU" id="3173644"/>
<dbReference type="GeneID" id="41335168"/>
<dbReference type="KEGG" id="ilo:IL0020"/>
<dbReference type="eggNOG" id="COG2922">
    <property type="taxonomic scope" value="Bacteria"/>
</dbReference>
<dbReference type="HOGENOM" id="CLU_133242_0_0_6"/>
<dbReference type="OrthoDB" id="9788984at2"/>
<dbReference type="Proteomes" id="UP000001171">
    <property type="component" value="Chromosome"/>
</dbReference>
<dbReference type="HAMAP" id="MF_00598">
    <property type="entry name" value="Smg"/>
    <property type="match status" value="1"/>
</dbReference>
<dbReference type="InterPro" id="IPR007456">
    <property type="entry name" value="Smg"/>
</dbReference>
<dbReference type="NCBIfam" id="NF002897">
    <property type="entry name" value="PRK03430.1"/>
    <property type="match status" value="1"/>
</dbReference>
<dbReference type="PANTHER" id="PTHR38692">
    <property type="entry name" value="PROTEIN SMG"/>
    <property type="match status" value="1"/>
</dbReference>
<dbReference type="PANTHER" id="PTHR38692:SF1">
    <property type="entry name" value="PROTEIN SMG"/>
    <property type="match status" value="1"/>
</dbReference>
<dbReference type="Pfam" id="PF04361">
    <property type="entry name" value="DUF494"/>
    <property type="match status" value="1"/>
</dbReference>
<feature type="chain" id="PRO_0000209172" description="Protein Smg homolog">
    <location>
        <begin position="1"/>
        <end position="157"/>
    </location>
</feature>
<evidence type="ECO:0000255" key="1">
    <source>
        <dbReference type="HAMAP-Rule" id="MF_00598"/>
    </source>
</evidence>
<sequence>MFDILMYLFENYIHSEMEVVVDHDELTNELTRAGFRHQEIQKALAWLERLADLQQMETKSYLDVAPQQSTRIYTAAEMTRLDSQSRGFLMYLENLGVLDFATREVVIDRVMELETPNFTLDDLKWVVLMVLFNVPGQEAAYDQMEGLLFEEAEGPLH</sequence>
<name>SMG_IDILO</name>
<accession>Q5QXI3</accession>
<organism>
    <name type="scientific">Idiomarina loihiensis (strain ATCC BAA-735 / DSM 15497 / L2-TR)</name>
    <dbReference type="NCBI Taxonomy" id="283942"/>
    <lineage>
        <taxon>Bacteria</taxon>
        <taxon>Pseudomonadati</taxon>
        <taxon>Pseudomonadota</taxon>
        <taxon>Gammaproteobacteria</taxon>
        <taxon>Alteromonadales</taxon>
        <taxon>Idiomarinaceae</taxon>
        <taxon>Idiomarina</taxon>
    </lineage>
</organism>
<gene>
    <name evidence="1" type="primary">smg</name>
    <name type="ordered locus">IL0020</name>
</gene>
<keyword id="KW-1185">Reference proteome</keyword>
<proteinExistence type="inferred from homology"/>
<protein>
    <recommendedName>
        <fullName evidence="1">Protein Smg homolog</fullName>
    </recommendedName>
</protein>
<reference key="1">
    <citation type="journal article" date="2004" name="Proc. Natl. Acad. Sci. U.S.A.">
        <title>Genome sequence of the deep-sea gamma-proteobacterium Idiomarina loihiensis reveals amino acid fermentation as a source of carbon and energy.</title>
        <authorList>
            <person name="Hou S."/>
            <person name="Saw J.H."/>
            <person name="Lee K.S."/>
            <person name="Freitas T.A."/>
            <person name="Belisle C."/>
            <person name="Kawarabayasi Y."/>
            <person name="Donachie S.P."/>
            <person name="Pikina A."/>
            <person name="Galperin M.Y."/>
            <person name="Koonin E.V."/>
            <person name="Makarova K.S."/>
            <person name="Omelchenko M.V."/>
            <person name="Sorokin A."/>
            <person name="Wolf Y.I."/>
            <person name="Li Q.X."/>
            <person name="Keum Y.S."/>
            <person name="Campbell S."/>
            <person name="Denery J."/>
            <person name="Aizawa S."/>
            <person name="Shibata S."/>
            <person name="Malahoff A."/>
            <person name="Alam M."/>
        </authorList>
    </citation>
    <scope>NUCLEOTIDE SEQUENCE [LARGE SCALE GENOMIC DNA]</scope>
    <source>
        <strain>ATCC BAA-735 / DSM 15497 / L2-TR</strain>
    </source>
</reference>
<comment type="similarity">
    <text evidence="1">Belongs to the Smg family.</text>
</comment>